<keyword id="KW-0028">Amino-acid biosynthesis</keyword>
<keyword id="KW-0057">Aromatic amino acid biosynthesis</keyword>
<keyword id="KW-0067">ATP-binding</keyword>
<keyword id="KW-0963">Cytoplasm</keyword>
<keyword id="KW-0418">Kinase</keyword>
<keyword id="KW-0547">Nucleotide-binding</keyword>
<keyword id="KW-0808">Transferase</keyword>
<organism>
    <name type="scientific">Halobacterium salinarum (strain ATCC 29341 / DSM 671 / R1)</name>
    <dbReference type="NCBI Taxonomy" id="478009"/>
    <lineage>
        <taxon>Archaea</taxon>
        <taxon>Methanobacteriati</taxon>
        <taxon>Methanobacteriota</taxon>
        <taxon>Stenosarchaea group</taxon>
        <taxon>Halobacteria</taxon>
        <taxon>Halobacteriales</taxon>
        <taxon>Halobacteriaceae</taxon>
        <taxon>Halobacterium</taxon>
        <taxon>Halobacterium salinarum NRC-34001</taxon>
    </lineage>
</organism>
<name>AROK_HALS3</name>
<gene>
    <name evidence="1" type="primary">aroK</name>
    <name type="ordered locus">OE_2785R</name>
</gene>
<protein>
    <recommendedName>
        <fullName evidence="1">Shikimate kinase</fullName>
        <shortName evidence="1">SK</shortName>
        <ecNumber evidence="1">2.7.1.71</ecNumber>
    </recommendedName>
</protein>
<sequence>MDGRAVAPAAGTVLNALATGVGAAFALDIDTEASVSVTPSESGVSGEIAGHPEADTALVERCVSRVIDRYGDGQGGHVRTESEVPLAAGLKSSSAAANATVLATLDALGVADEVDRVDAARLGVQAARDAGVTVTGAFDDAAASMLGGVAMTDNREDDLLFRDAVEWHAAVWTPPERAYSADADVARCERVSGLAEHVAALAAAGDYGTAMTVNGLAFCAALDFPTAPAVTALPHAAGVSLSGTGPSYVAVGDEDGIEEVSTRWHENPGTVRETTTQLAGARTT</sequence>
<evidence type="ECO:0000255" key="1">
    <source>
        <dbReference type="HAMAP-Rule" id="MF_00370"/>
    </source>
</evidence>
<comment type="catalytic activity">
    <reaction evidence="1">
        <text>shikimate + ATP = 3-phosphoshikimate + ADP + H(+)</text>
        <dbReference type="Rhea" id="RHEA:13121"/>
        <dbReference type="ChEBI" id="CHEBI:15378"/>
        <dbReference type="ChEBI" id="CHEBI:30616"/>
        <dbReference type="ChEBI" id="CHEBI:36208"/>
        <dbReference type="ChEBI" id="CHEBI:145989"/>
        <dbReference type="ChEBI" id="CHEBI:456216"/>
        <dbReference type="EC" id="2.7.1.71"/>
    </reaction>
</comment>
<comment type="pathway">
    <text evidence="1">Metabolic intermediate biosynthesis; chorismate biosynthesis; chorismate from D-erythrose 4-phosphate and phosphoenolpyruvate: step 5/7.</text>
</comment>
<comment type="subcellular location">
    <subcellularLocation>
        <location evidence="1">Cytoplasm</location>
    </subcellularLocation>
</comment>
<comment type="similarity">
    <text evidence="1">Belongs to the GHMP kinase family. Archaeal shikimate kinase subfamily.</text>
</comment>
<accession>B0R569</accession>
<dbReference type="EC" id="2.7.1.71" evidence="1"/>
<dbReference type="EMBL" id="AM774415">
    <property type="protein sequence ID" value="CAP13885.1"/>
    <property type="molecule type" value="Genomic_DNA"/>
</dbReference>
<dbReference type="RefSeq" id="WP_010902901.1">
    <property type="nucleotide sequence ID" value="NC_010364.1"/>
</dbReference>
<dbReference type="SMR" id="B0R569"/>
<dbReference type="EnsemblBacteria" id="CAP13885">
    <property type="protein sequence ID" value="CAP13885"/>
    <property type="gene ID" value="OE_2785R"/>
</dbReference>
<dbReference type="KEGG" id="hsl:OE_2785R"/>
<dbReference type="HOGENOM" id="CLU_073768_0_0_2"/>
<dbReference type="PhylomeDB" id="B0R569"/>
<dbReference type="UniPathway" id="UPA00053">
    <property type="reaction ID" value="UER00088"/>
</dbReference>
<dbReference type="Proteomes" id="UP000001321">
    <property type="component" value="Chromosome"/>
</dbReference>
<dbReference type="GO" id="GO:0005737">
    <property type="term" value="C:cytoplasm"/>
    <property type="evidence" value="ECO:0007669"/>
    <property type="project" value="UniProtKB-SubCell"/>
</dbReference>
<dbReference type="GO" id="GO:0005524">
    <property type="term" value="F:ATP binding"/>
    <property type="evidence" value="ECO:0007669"/>
    <property type="project" value="UniProtKB-UniRule"/>
</dbReference>
<dbReference type="GO" id="GO:0004765">
    <property type="term" value="F:shikimate kinase activity"/>
    <property type="evidence" value="ECO:0007669"/>
    <property type="project" value="UniProtKB-UniRule"/>
</dbReference>
<dbReference type="GO" id="GO:0008652">
    <property type="term" value="P:amino acid biosynthetic process"/>
    <property type="evidence" value="ECO:0007669"/>
    <property type="project" value="UniProtKB-KW"/>
</dbReference>
<dbReference type="GO" id="GO:0009073">
    <property type="term" value="P:aromatic amino acid family biosynthetic process"/>
    <property type="evidence" value="ECO:0007669"/>
    <property type="project" value="UniProtKB-KW"/>
</dbReference>
<dbReference type="GO" id="GO:0009423">
    <property type="term" value="P:chorismate biosynthetic process"/>
    <property type="evidence" value="ECO:0007669"/>
    <property type="project" value="UniProtKB-UniRule"/>
</dbReference>
<dbReference type="Gene3D" id="3.30.230.10">
    <property type="match status" value="1"/>
</dbReference>
<dbReference type="HAMAP" id="MF_00370">
    <property type="entry name" value="Shik_kinase_arch"/>
    <property type="match status" value="1"/>
</dbReference>
<dbReference type="InterPro" id="IPR006204">
    <property type="entry name" value="GHMP_kinase_N_dom"/>
</dbReference>
<dbReference type="InterPro" id="IPR020568">
    <property type="entry name" value="Ribosomal_Su5_D2-typ_SF"/>
</dbReference>
<dbReference type="InterPro" id="IPR014721">
    <property type="entry name" value="Ribsml_uS5_D2-typ_fold_subgr"/>
</dbReference>
<dbReference type="InterPro" id="IPR010189">
    <property type="entry name" value="SK_arc"/>
</dbReference>
<dbReference type="NCBIfam" id="TIGR01920">
    <property type="entry name" value="Shik_kin_archae"/>
    <property type="match status" value="1"/>
</dbReference>
<dbReference type="PANTHER" id="PTHR20861">
    <property type="entry name" value="HOMOSERINE/4-DIPHOSPHOCYTIDYL-2-C-METHYL-D-ERYTHRITOL KINASE"/>
    <property type="match status" value="1"/>
</dbReference>
<dbReference type="PANTHER" id="PTHR20861:SF3">
    <property type="entry name" value="SHIKIMATE KINASE"/>
    <property type="match status" value="1"/>
</dbReference>
<dbReference type="Pfam" id="PF00288">
    <property type="entry name" value="GHMP_kinases_N"/>
    <property type="match status" value="1"/>
</dbReference>
<dbReference type="PIRSF" id="PIRSF005758">
    <property type="entry name" value="Shikimt_kin_arch"/>
    <property type="match status" value="1"/>
</dbReference>
<dbReference type="SUPFAM" id="SSF54211">
    <property type="entry name" value="Ribosomal protein S5 domain 2-like"/>
    <property type="match status" value="1"/>
</dbReference>
<proteinExistence type="inferred from homology"/>
<feature type="chain" id="PRO_1000121518" description="Shikimate kinase">
    <location>
        <begin position="1"/>
        <end position="284"/>
    </location>
</feature>
<feature type="binding site" evidence="1">
    <location>
        <begin position="85"/>
        <end position="95"/>
    </location>
    <ligand>
        <name>ATP</name>
        <dbReference type="ChEBI" id="CHEBI:30616"/>
    </ligand>
</feature>
<reference key="1">
    <citation type="journal article" date="2008" name="Genomics">
        <title>Evolution in the laboratory: the genome of Halobacterium salinarum strain R1 compared to that of strain NRC-1.</title>
        <authorList>
            <person name="Pfeiffer F."/>
            <person name="Schuster S.C."/>
            <person name="Broicher A."/>
            <person name="Falb M."/>
            <person name="Palm P."/>
            <person name="Rodewald K."/>
            <person name="Ruepp A."/>
            <person name="Soppa J."/>
            <person name="Tittor J."/>
            <person name="Oesterhelt D."/>
        </authorList>
    </citation>
    <scope>NUCLEOTIDE SEQUENCE [LARGE SCALE GENOMIC DNA]</scope>
    <source>
        <strain>ATCC 29341 / DSM 671 / R1</strain>
    </source>
</reference>